<comment type="function">
    <text evidence="1">Multifunctional protein that plays a role in silencing host antiviral defenses and promoting viral transcription. Does not seem to be essential for HBV infection. May be directly involved in development of cirrhosis and liver cancer (hepatocellular carcinoma). Most of cytosolic activities involve modulation of cytosolic calcium. The effect on apoptosis is controversial depending on the cell types in which the studies have been conducted. May induce apoptosis by localizing in mitochondria and causing loss of mitochondrial membrane potential. May also modulate apoptosis by binding host CFLAR, a key regulator of the death-inducing signaling complex (DISC). Promotes viral transcription by using the host E3 ubiquitin ligase DDB1 to target the SMC5-SMC6 complex to proteasomal degradation. This host complex would otherwise bind to viral episomal DNA, and prevents its transcription. Moderately stimulates transcription of many different viral and cellular transcription elements. Promoters and enhancers stimulated by HBx contain DNA binding sites for NF-kappa-B, AP-1, AP-2, c-EBP, ATF/CREB, or the calcium-activated factor NF-AT.</text>
</comment>
<comment type="subunit">
    <text evidence="1">May form homodimer. May interact with host CEBPA, CFLAR, CREB1, DDB1, E4F1, HBXIP, HSPD1/HSP60, NFKBIA, POLR2E and SMAD4. Interacts with host SMC5-SMC6 complex and induces its degradation. Interacts with host TRPC4AP; leading to prevent ubiquitination of TRPC4AP. Interacts with host PLSCR1; this interaction promotes ubiquitination and degradation of HBx and impairs HBx-mediated cell proliferation.</text>
</comment>
<comment type="subcellular location">
    <subcellularLocation>
        <location evidence="1">Host cytoplasm</location>
    </subcellularLocation>
    <subcellularLocation>
        <location evidence="1">Host nucleus</location>
    </subcellularLocation>
    <subcellularLocation>
        <location evidence="1">Host mitochondrion</location>
    </subcellularLocation>
    <text evidence="1">Mainly cytoplasmic as only a fraction is detected in the nucleus. In cytoplasm, a minor fraction associates with mitochondria or proteasomes.</text>
</comment>
<comment type="PTM">
    <text evidence="1">A fraction may be phosphorylated in insect cells and HepG2 cells, a human hepatoblastoma cell line. Phosphorylated in vitro by host protein kinase C or mitogen-activated protein kinase. N-acetylated in insect cells.</text>
</comment>
<comment type="similarity">
    <text evidence="1">Belongs to the orthohepadnavirus protein X family.</text>
</comment>
<organismHost>
    <name type="scientific">Marmota monax</name>
    <name type="common">Woodchuck</name>
    <dbReference type="NCBI Taxonomy" id="9995"/>
</organismHost>
<reference key="1">
    <citation type="journal article" date="1988" name="Virology">
        <title>Sequence comparison of woodchuck hepatitis virus replicative forms shows conservation of the genome.</title>
        <authorList>
            <person name="Cohen J.I."/>
            <person name="Miller R.H."/>
            <person name="Rosenblum B."/>
            <person name="Denniston K."/>
            <person name="Gerin J.L."/>
            <person name="Purcell R.H."/>
        </authorList>
    </citation>
    <scope>NUCLEOTIDE SEQUENCE [GENOMIC DNA]</scope>
</reference>
<gene>
    <name evidence="1" type="primary">X</name>
</gene>
<proteinExistence type="inferred from homology"/>
<evidence type="ECO:0000255" key="1">
    <source>
        <dbReference type="HAMAP-Rule" id="MF_04074"/>
    </source>
</evidence>
<evidence type="ECO:0000256" key="2">
    <source>
        <dbReference type="SAM" id="MobiDB-lite"/>
    </source>
</evidence>
<feature type="chain" id="PRO_0000222374" description="Protein X">
    <location>
        <begin position="1"/>
        <end position="141"/>
    </location>
</feature>
<feature type="region of interest" description="Disordered" evidence="2">
    <location>
        <begin position="24"/>
        <end position="52"/>
    </location>
</feature>
<feature type="region of interest" description="Mitochondrial targeting sequence" evidence="1">
    <location>
        <begin position="68"/>
        <end position="113"/>
    </location>
</feature>
<feature type="compositionally biased region" description="Low complexity" evidence="2">
    <location>
        <begin position="33"/>
        <end position="48"/>
    </location>
</feature>
<protein>
    <recommendedName>
        <fullName evidence="1">Protein X</fullName>
    </recommendedName>
    <alternativeName>
        <fullName evidence="1">HBx</fullName>
    </alternativeName>
    <alternativeName>
        <fullName evidence="1">Peptide X</fullName>
    </alternativeName>
    <alternativeName>
        <fullName evidence="1">pX</fullName>
    </alternativeName>
</protein>
<organism>
    <name type="scientific">Woodchuck hepatitis B virus (isolate 59)</name>
    <name type="common">WHV</name>
    <dbReference type="NCBI Taxonomy" id="10431"/>
    <lineage>
        <taxon>Viruses</taxon>
        <taxon>Riboviria</taxon>
        <taxon>Pararnavirae</taxon>
        <taxon>Artverviricota</taxon>
        <taxon>Revtraviricetes</taxon>
        <taxon>Blubervirales</taxon>
        <taxon>Hepadnaviridae</taxon>
        <taxon>Orthohepadnavirus</taxon>
        <taxon>Woodchuck hepatitis virus</taxon>
    </lineage>
</organism>
<dbReference type="EMBL" id="M19183">
    <property type="protein sequence ID" value="AAA46764.1"/>
    <property type="molecule type" value="Genomic_DNA"/>
</dbReference>
<dbReference type="PIR" id="E29969">
    <property type="entry name" value="QQVL59"/>
</dbReference>
<dbReference type="Proteomes" id="UP000007542">
    <property type="component" value="Genome"/>
</dbReference>
<dbReference type="GO" id="GO:0033650">
    <property type="term" value="C:host cell mitochondrion"/>
    <property type="evidence" value="ECO:0007669"/>
    <property type="project" value="UniProtKB-SubCell"/>
</dbReference>
<dbReference type="GO" id="GO:0042025">
    <property type="term" value="C:host cell nucleus"/>
    <property type="evidence" value="ECO:0007669"/>
    <property type="project" value="UniProtKB-SubCell"/>
</dbReference>
<dbReference type="GO" id="GO:0006351">
    <property type="term" value="P:DNA-templated transcription"/>
    <property type="evidence" value="ECO:0007669"/>
    <property type="project" value="UniProtKB-UniRule"/>
</dbReference>
<dbReference type="GO" id="GO:0085033">
    <property type="term" value="P:symbiont-mediated activation of host NF-kappaB cascade"/>
    <property type="evidence" value="ECO:0007669"/>
    <property type="project" value="UniProtKB-UniRule"/>
</dbReference>
<dbReference type="GO" id="GO:0039592">
    <property type="term" value="P:symbiont-mediated arrest of host cell cycle during G2/M transition"/>
    <property type="evidence" value="ECO:0007669"/>
    <property type="project" value="UniProtKB-UniRule"/>
</dbReference>
<dbReference type="GO" id="GO:0019079">
    <property type="term" value="P:viral genome replication"/>
    <property type="evidence" value="ECO:0007669"/>
    <property type="project" value="UniProtKB-UniRule"/>
</dbReference>
<dbReference type="HAMAP" id="MF_04074">
    <property type="entry name" value="HBV_X"/>
    <property type="match status" value="1"/>
</dbReference>
<dbReference type="InterPro" id="IPR000236">
    <property type="entry name" value="Transactivation_prot_X"/>
</dbReference>
<dbReference type="Pfam" id="PF00739">
    <property type="entry name" value="X"/>
    <property type="match status" value="1"/>
</dbReference>
<sequence length="141" mass="15272">MAARLCCQLDSARDVLLLRPFGPQSSGPPFPRPAAGSAASSTSSPSPSDESDLPLGRLPACFASASGPCCLVFTCADLRTMDSTVNFVSWHAKRQLGMPSKDLWTPYIKDQLLTKWEEGSIDPRLSIFVLGGCRHKCMRLL</sequence>
<keyword id="KW-1074">Activation of host NF-kappa-B by virus</keyword>
<keyword id="KW-0010">Activator</keyword>
<keyword id="KW-0053">Apoptosis</keyword>
<keyword id="KW-1035">Host cytoplasm</keyword>
<keyword id="KW-1079">Host G2/M cell cycle arrest by virus</keyword>
<keyword id="KW-1045">Host mitochondrion</keyword>
<keyword id="KW-1048">Host nucleus</keyword>
<keyword id="KW-0945">Host-virus interaction</keyword>
<keyword id="KW-1121">Modulation of host cell cycle by virus</keyword>
<keyword id="KW-0804">Transcription</keyword>
<keyword id="KW-0805">Transcription regulation</keyword>
<accession>P12914</accession>
<name>X_WHV3</name>